<name>RL2_FRATN</name>
<keyword id="KW-0687">Ribonucleoprotein</keyword>
<keyword id="KW-0689">Ribosomal protein</keyword>
<keyword id="KW-0694">RNA-binding</keyword>
<keyword id="KW-0699">rRNA-binding</keyword>
<accession>A0Q4I6</accession>
<organism>
    <name type="scientific">Francisella tularensis subsp. novicida (strain U112)</name>
    <dbReference type="NCBI Taxonomy" id="401614"/>
    <lineage>
        <taxon>Bacteria</taxon>
        <taxon>Pseudomonadati</taxon>
        <taxon>Pseudomonadota</taxon>
        <taxon>Gammaproteobacteria</taxon>
        <taxon>Thiotrichales</taxon>
        <taxon>Francisellaceae</taxon>
        <taxon>Francisella</taxon>
    </lineage>
</organism>
<dbReference type="EMBL" id="CP000439">
    <property type="protein sequence ID" value="ABK89151.1"/>
    <property type="molecule type" value="Genomic_DNA"/>
</dbReference>
<dbReference type="RefSeq" id="WP_003027197.1">
    <property type="nucleotide sequence ID" value="NZ_CP009633.1"/>
</dbReference>
<dbReference type="SMR" id="A0Q4I6"/>
<dbReference type="GeneID" id="75264258"/>
<dbReference type="KEGG" id="ftn:FTN_0242"/>
<dbReference type="KEGG" id="ftx:AW25_1800"/>
<dbReference type="BioCyc" id="FTUL401614:G1G75-253-MONOMER"/>
<dbReference type="Proteomes" id="UP000000762">
    <property type="component" value="Chromosome"/>
</dbReference>
<dbReference type="GO" id="GO:0015934">
    <property type="term" value="C:large ribosomal subunit"/>
    <property type="evidence" value="ECO:0007669"/>
    <property type="project" value="InterPro"/>
</dbReference>
<dbReference type="GO" id="GO:0019843">
    <property type="term" value="F:rRNA binding"/>
    <property type="evidence" value="ECO:0007669"/>
    <property type="project" value="UniProtKB-UniRule"/>
</dbReference>
<dbReference type="GO" id="GO:0003735">
    <property type="term" value="F:structural constituent of ribosome"/>
    <property type="evidence" value="ECO:0007669"/>
    <property type="project" value="InterPro"/>
</dbReference>
<dbReference type="GO" id="GO:0016740">
    <property type="term" value="F:transferase activity"/>
    <property type="evidence" value="ECO:0007669"/>
    <property type="project" value="InterPro"/>
</dbReference>
<dbReference type="GO" id="GO:0002181">
    <property type="term" value="P:cytoplasmic translation"/>
    <property type="evidence" value="ECO:0007669"/>
    <property type="project" value="TreeGrafter"/>
</dbReference>
<dbReference type="FunFam" id="2.30.30.30:FF:000001">
    <property type="entry name" value="50S ribosomal protein L2"/>
    <property type="match status" value="1"/>
</dbReference>
<dbReference type="FunFam" id="2.40.50.140:FF:000003">
    <property type="entry name" value="50S ribosomal protein L2"/>
    <property type="match status" value="1"/>
</dbReference>
<dbReference type="FunFam" id="4.10.950.10:FF:000001">
    <property type="entry name" value="50S ribosomal protein L2"/>
    <property type="match status" value="1"/>
</dbReference>
<dbReference type="Gene3D" id="2.30.30.30">
    <property type="match status" value="1"/>
</dbReference>
<dbReference type="Gene3D" id="2.40.50.140">
    <property type="entry name" value="Nucleic acid-binding proteins"/>
    <property type="match status" value="1"/>
</dbReference>
<dbReference type="Gene3D" id="4.10.950.10">
    <property type="entry name" value="Ribosomal protein L2, domain 3"/>
    <property type="match status" value="1"/>
</dbReference>
<dbReference type="HAMAP" id="MF_01320_B">
    <property type="entry name" value="Ribosomal_uL2_B"/>
    <property type="match status" value="1"/>
</dbReference>
<dbReference type="InterPro" id="IPR012340">
    <property type="entry name" value="NA-bd_OB-fold"/>
</dbReference>
<dbReference type="InterPro" id="IPR014722">
    <property type="entry name" value="Rib_uL2_dom2"/>
</dbReference>
<dbReference type="InterPro" id="IPR002171">
    <property type="entry name" value="Ribosomal_uL2"/>
</dbReference>
<dbReference type="InterPro" id="IPR005880">
    <property type="entry name" value="Ribosomal_uL2_bac/org-type"/>
</dbReference>
<dbReference type="InterPro" id="IPR022669">
    <property type="entry name" value="Ribosomal_uL2_C"/>
</dbReference>
<dbReference type="InterPro" id="IPR022671">
    <property type="entry name" value="Ribosomal_uL2_CS"/>
</dbReference>
<dbReference type="InterPro" id="IPR014726">
    <property type="entry name" value="Ribosomal_uL2_dom3"/>
</dbReference>
<dbReference type="InterPro" id="IPR022666">
    <property type="entry name" value="Ribosomal_uL2_RNA-bd_dom"/>
</dbReference>
<dbReference type="InterPro" id="IPR008991">
    <property type="entry name" value="Translation_prot_SH3-like_sf"/>
</dbReference>
<dbReference type="NCBIfam" id="TIGR01171">
    <property type="entry name" value="rplB_bact"/>
    <property type="match status" value="1"/>
</dbReference>
<dbReference type="PANTHER" id="PTHR13691:SF5">
    <property type="entry name" value="LARGE RIBOSOMAL SUBUNIT PROTEIN UL2M"/>
    <property type="match status" value="1"/>
</dbReference>
<dbReference type="PANTHER" id="PTHR13691">
    <property type="entry name" value="RIBOSOMAL PROTEIN L2"/>
    <property type="match status" value="1"/>
</dbReference>
<dbReference type="Pfam" id="PF00181">
    <property type="entry name" value="Ribosomal_L2"/>
    <property type="match status" value="1"/>
</dbReference>
<dbReference type="Pfam" id="PF03947">
    <property type="entry name" value="Ribosomal_L2_C"/>
    <property type="match status" value="1"/>
</dbReference>
<dbReference type="PIRSF" id="PIRSF002158">
    <property type="entry name" value="Ribosomal_L2"/>
    <property type="match status" value="1"/>
</dbReference>
<dbReference type="SMART" id="SM01383">
    <property type="entry name" value="Ribosomal_L2"/>
    <property type="match status" value="1"/>
</dbReference>
<dbReference type="SMART" id="SM01382">
    <property type="entry name" value="Ribosomal_L2_C"/>
    <property type="match status" value="1"/>
</dbReference>
<dbReference type="SUPFAM" id="SSF50249">
    <property type="entry name" value="Nucleic acid-binding proteins"/>
    <property type="match status" value="1"/>
</dbReference>
<dbReference type="SUPFAM" id="SSF50104">
    <property type="entry name" value="Translation proteins SH3-like domain"/>
    <property type="match status" value="1"/>
</dbReference>
<dbReference type="PROSITE" id="PS00467">
    <property type="entry name" value="RIBOSOMAL_L2"/>
    <property type="match status" value="1"/>
</dbReference>
<proteinExistence type="inferred from homology"/>
<reference key="1">
    <citation type="journal article" date="2007" name="Genome Biol.">
        <title>Comparison of Francisella tularensis genomes reveals evolutionary events associated with the emergence of human pathogenic strains.</title>
        <authorList>
            <person name="Rohmer L."/>
            <person name="Fong C."/>
            <person name="Abmayr S."/>
            <person name="Wasnick M."/>
            <person name="Larson Freeman T.J."/>
            <person name="Radey M."/>
            <person name="Guina T."/>
            <person name="Svensson K."/>
            <person name="Hayden H.S."/>
            <person name="Jacobs M."/>
            <person name="Gallagher L.A."/>
            <person name="Manoil C."/>
            <person name="Ernst R.K."/>
            <person name="Drees B."/>
            <person name="Buckley D."/>
            <person name="Haugen E."/>
            <person name="Bovee D."/>
            <person name="Zhou Y."/>
            <person name="Chang J."/>
            <person name="Levy R."/>
            <person name="Lim R."/>
            <person name="Gillett W."/>
            <person name="Guenthener D."/>
            <person name="Kang A."/>
            <person name="Shaffer S.A."/>
            <person name="Taylor G."/>
            <person name="Chen J."/>
            <person name="Gallis B."/>
            <person name="D'Argenio D.A."/>
            <person name="Forsman M."/>
            <person name="Olson M.V."/>
            <person name="Goodlett D.R."/>
            <person name="Kaul R."/>
            <person name="Miller S.I."/>
            <person name="Brittnacher M.J."/>
        </authorList>
    </citation>
    <scope>NUCLEOTIDE SEQUENCE [LARGE SCALE GENOMIC DNA]</scope>
    <source>
        <strain>U112</strain>
    </source>
</reference>
<evidence type="ECO:0000255" key="1">
    <source>
        <dbReference type="HAMAP-Rule" id="MF_01320"/>
    </source>
</evidence>
<evidence type="ECO:0000256" key="2">
    <source>
        <dbReference type="SAM" id="MobiDB-lite"/>
    </source>
</evidence>
<evidence type="ECO:0000305" key="3"/>
<comment type="function">
    <text evidence="1">One of the primary rRNA binding proteins. Required for association of the 30S and 50S subunits to form the 70S ribosome, for tRNA binding and peptide bond formation. It has been suggested to have peptidyltransferase activity; this is somewhat controversial. Makes several contacts with the 16S rRNA in the 70S ribosome.</text>
</comment>
<comment type="subunit">
    <text evidence="1">Part of the 50S ribosomal subunit. Forms a bridge to the 30S subunit in the 70S ribosome.</text>
</comment>
<comment type="similarity">
    <text evidence="1">Belongs to the universal ribosomal protein uL2 family.</text>
</comment>
<gene>
    <name evidence="1" type="primary">rplB</name>
    <name type="ordered locus">FTN_0242</name>
</gene>
<sequence>MIEIKKAKPTSPGRRHVVSVKNTELHTGKPFKGLVEVKKSKAGRNNTGRITVRHQGGGHKQHYRIVDFKRNKDDITAKVERIEYDPNRSANIALVLYADGERRYIVAPKGLKKDMSVISGEKVDVAVGNCMPLRNIPLGTVIHNIEMKPKKGAQMIRSAGTFAQLVGKDNAYAIIRLRSGEMRRVLLDCRAVIGVVSNSEHNLKSLGKAGAKRWRGIRPTVRGVAMNPVDHPHGGGEGRTSGGRHPVTPWGIPTKGYKTRRNKRSNKLIVQKRK</sequence>
<feature type="chain" id="PRO_0000309919" description="Large ribosomal subunit protein uL2">
    <location>
        <begin position="1"/>
        <end position="274"/>
    </location>
</feature>
<feature type="region of interest" description="Disordered" evidence="2">
    <location>
        <begin position="224"/>
        <end position="274"/>
    </location>
</feature>
<feature type="compositionally biased region" description="Basic residues" evidence="2">
    <location>
        <begin position="257"/>
        <end position="274"/>
    </location>
</feature>
<protein>
    <recommendedName>
        <fullName evidence="1">Large ribosomal subunit protein uL2</fullName>
    </recommendedName>
    <alternativeName>
        <fullName evidence="3">50S ribosomal protein L2</fullName>
    </alternativeName>
</protein>